<keyword id="KW-0032">Aminotransferase</keyword>
<keyword id="KW-0663">Pyridoxal phosphate</keyword>
<keyword id="KW-0808">Transferase</keyword>
<reference key="1">
    <citation type="journal article" date="2003" name="Nature">
        <title>The genome of a motile marine Synechococcus.</title>
        <authorList>
            <person name="Palenik B."/>
            <person name="Brahamsha B."/>
            <person name="Larimer F.W."/>
            <person name="Land M.L."/>
            <person name="Hauser L."/>
            <person name="Chain P."/>
            <person name="Lamerdin J.E."/>
            <person name="Regala W."/>
            <person name="Allen E.E."/>
            <person name="McCarren J."/>
            <person name="Paulsen I.T."/>
            <person name="Dufresne A."/>
            <person name="Partensky F."/>
            <person name="Webb E.A."/>
            <person name="Waterbury J."/>
        </authorList>
    </citation>
    <scope>NUCLEOTIDE SEQUENCE [LARGE SCALE GENOMIC DNA]</scope>
    <source>
        <strain>WH8102</strain>
    </source>
</reference>
<evidence type="ECO:0000255" key="1">
    <source>
        <dbReference type="HAMAP-Rule" id="MF_01642"/>
    </source>
</evidence>
<protein>
    <recommendedName>
        <fullName evidence="1">LL-diaminopimelate aminotransferase</fullName>
        <shortName evidence="1">DAP-AT</shortName>
        <shortName evidence="1">DAP-aminotransferase</shortName>
        <shortName evidence="1">LL-DAP-aminotransferase</shortName>
        <ecNumber evidence="1">2.6.1.83</ecNumber>
    </recommendedName>
</protein>
<proteinExistence type="inferred from homology"/>
<feature type="chain" id="PRO_0000312553" description="LL-diaminopimelate aminotransferase">
    <location>
        <begin position="1"/>
        <end position="408"/>
    </location>
</feature>
<feature type="binding site" evidence="1">
    <location>
        <position position="15"/>
    </location>
    <ligand>
        <name>substrate</name>
    </ligand>
</feature>
<feature type="binding site" evidence="1">
    <location>
        <position position="42"/>
    </location>
    <ligand>
        <name>substrate</name>
    </ligand>
</feature>
<feature type="binding site" evidence="1">
    <location>
        <position position="72"/>
    </location>
    <ligand>
        <name>pyridoxal 5'-phosphate</name>
        <dbReference type="ChEBI" id="CHEBI:597326"/>
    </ligand>
</feature>
<feature type="binding site" evidence="1">
    <location>
        <begin position="108"/>
        <end position="109"/>
    </location>
    <ligand>
        <name>pyridoxal 5'-phosphate</name>
        <dbReference type="ChEBI" id="CHEBI:597326"/>
    </ligand>
</feature>
<feature type="binding site" evidence="1">
    <location>
        <position position="109"/>
    </location>
    <ligand>
        <name>substrate</name>
    </ligand>
</feature>
<feature type="binding site" evidence="1">
    <location>
        <position position="132"/>
    </location>
    <ligand>
        <name>pyridoxal 5'-phosphate</name>
        <dbReference type="ChEBI" id="CHEBI:597326"/>
    </ligand>
</feature>
<feature type="binding site" evidence="1">
    <location>
        <position position="132"/>
    </location>
    <ligand>
        <name>substrate</name>
    </ligand>
</feature>
<feature type="binding site" evidence="1">
    <location>
        <position position="187"/>
    </location>
    <ligand>
        <name>pyridoxal 5'-phosphate</name>
        <dbReference type="ChEBI" id="CHEBI:597326"/>
    </ligand>
</feature>
<feature type="binding site" evidence="1">
    <location>
        <position position="187"/>
    </location>
    <ligand>
        <name>substrate</name>
    </ligand>
</feature>
<feature type="binding site" evidence="1">
    <location>
        <position position="218"/>
    </location>
    <ligand>
        <name>pyridoxal 5'-phosphate</name>
        <dbReference type="ChEBI" id="CHEBI:597326"/>
    </ligand>
</feature>
<feature type="binding site" evidence="1">
    <location>
        <begin position="246"/>
        <end position="248"/>
    </location>
    <ligand>
        <name>pyridoxal 5'-phosphate</name>
        <dbReference type="ChEBI" id="CHEBI:597326"/>
    </ligand>
</feature>
<feature type="binding site" evidence="1">
    <location>
        <position position="257"/>
    </location>
    <ligand>
        <name>pyridoxal 5'-phosphate</name>
        <dbReference type="ChEBI" id="CHEBI:597326"/>
    </ligand>
</feature>
<feature type="binding site" evidence="1">
    <location>
        <position position="292"/>
    </location>
    <ligand>
        <name>pyridoxal 5'-phosphate</name>
        <dbReference type="ChEBI" id="CHEBI:597326"/>
    </ligand>
</feature>
<feature type="binding site" evidence="1">
    <location>
        <position position="292"/>
    </location>
    <ligand>
        <name>substrate</name>
    </ligand>
</feature>
<feature type="binding site" evidence="1">
    <location>
        <position position="388"/>
    </location>
    <ligand>
        <name>substrate</name>
    </ligand>
</feature>
<feature type="modified residue" description="N6-(pyridoxal phosphate)lysine" evidence="1">
    <location>
        <position position="249"/>
    </location>
</feature>
<organism>
    <name type="scientific">Parasynechococcus marenigrum (strain WH8102)</name>
    <dbReference type="NCBI Taxonomy" id="84588"/>
    <lineage>
        <taxon>Bacteria</taxon>
        <taxon>Bacillati</taxon>
        <taxon>Cyanobacteriota</taxon>
        <taxon>Cyanophyceae</taxon>
        <taxon>Synechococcales</taxon>
        <taxon>Prochlorococcaceae</taxon>
        <taxon>Parasynechococcus</taxon>
        <taxon>Parasynechococcus marenigrum</taxon>
    </lineage>
</organism>
<accession>Q7U4C3</accession>
<dbReference type="EC" id="2.6.1.83" evidence="1"/>
<dbReference type="EMBL" id="BX569694">
    <property type="protein sequence ID" value="CAE08662.1"/>
    <property type="molecule type" value="Genomic_DNA"/>
</dbReference>
<dbReference type="RefSeq" id="WP_011129003.1">
    <property type="nucleotide sequence ID" value="NC_005070.1"/>
</dbReference>
<dbReference type="SMR" id="Q7U4C3"/>
<dbReference type="STRING" id="84588.SYNW2147"/>
<dbReference type="KEGG" id="syw:SYNW2147"/>
<dbReference type="eggNOG" id="COG0436">
    <property type="taxonomic scope" value="Bacteria"/>
</dbReference>
<dbReference type="HOGENOM" id="CLU_051433_0_0_3"/>
<dbReference type="UniPathway" id="UPA00034">
    <property type="reaction ID" value="UER00466"/>
</dbReference>
<dbReference type="Proteomes" id="UP000001422">
    <property type="component" value="Chromosome"/>
</dbReference>
<dbReference type="GO" id="GO:0010285">
    <property type="term" value="F:L,L-diaminopimelate aminotransferase activity"/>
    <property type="evidence" value="ECO:0007669"/>
    <property type="project" value="UniProtKB-UniRule"/>
</dbReference>
<dbReference type="GO" id="GO:0030170">
    <property type="term" value="F:pyridoxal phosphate binding"/>
    <property type="evidence" value="ECO:0007669"/>
    <property type="project" value="UniProtKB-UniRule"/>
</dbReference>
<dbReference type="GO" id="GO:0033362">
    <property type="term" value="P:lysine biosynthetic process via diaminopimelate, diaminopimelate-aminotransferase pathway"/>
    <property type="evidence" value="ECO:0007669"/>
    <property type="project" value="UniProtKB-UniRule"/>
</dbReference>
<dbReference type="CDD" id="cd00609">
    <property type="entry name" value="AAT_like"/>
    <property type="match status" value="1"/>
</dbReference>
<dbReference type="FunFam" id="3.40.640.10:FF:000099">
    <property type="entry name" value="LL-diaminopimelate aminotransferase, chloroplastic"/>
    <property type="match status" value="1"/>
</dbReference>
<dbReference type="Gene3D" id="3.90.1150.10">
    <property type="entry name" value="Aspartate Aminotransferase, domain 1"/>
    <property type="match status" value="1"/>
</dbReference>
<dbReference type="Gene3D" id="3.40.640.10">
    <property type="entry name" value="Type I PLP-dependent aspartate aminotransferase-like (Major domain)"/>
    <property type="match status" value="1"/>
</dbReference>
<dbReference type="HAMAP" id="MF_01642">
    <property type="entry name" value="DapL_aminotrans_1"/>
    <property type="match status" value="1"/>
</dbReference>
<dbReference type="InterPro" id="IPR004839">
    <property type="entry name" value="Aminotransferase_I/II_large"/>
</dbReference>
<dbReference type="InterPro" id="IPR019942">
    <property type="entry name" value="DapL/ALD1"/>
</dbReference>
<dbReference type="InterPro" id="IPR015424">
    <property type="entry name" value="PyrdxlP-dep_Trfase"/>
</dbReference>
<dbReference type="InterPro" id="IPR015421">
    <property type="entry name" value="PyrdxlP-dep_Trfase_major"/>
</dbReference>
<dbReference type="InterPro" id="IPR015422">
    <property type="entry name" value="PyrdxlP-dep_Trfase_small"/>
</dbReference>
<dbReference type="NCBIfam" id="TIGR03542">
    <property type="entry name" value="DAPAT_plant"/>
    <property type="match status" value="1"/>
</dbReference>
<dbReference type="PANTHER" id="PTHR43144">
    <property type="entry name" value="AMINOTRANSFERASE"/>
    <property type="match status" value="1"/>
</dbReference>
<dbReference type="Pfam" id="PF00155">
    <property type="entry name" value="Aminotran_1_2"/>
    <property type="match status" value="1"/>
</dbReference>
<dbReference type="SUPFAM" id="SSF53383">
    <property type="entry name" value="PLP-dependent transferases"/>
    <property type="match status" value="1"/>
</dbReference>
<sequence>MVQVNGNYLKLKAGYLFPEIGRRVKAFSAANPDAALIRLGIGDVTEPLPLACREAMKTAIDAMGTAEGFHGYGPEQGYGWLREAIAKHDFQARGCDISAEEIFVSDGSKCDSSNILDILGEGNRIAVTDPVYPVYVDTNVMAGRTGEAGEEGRYGGLTYLPISADNGFAAQIPSEPVDLIYLCFPNNPTGAVATKGQLKAWVDYARSNGSLILFDAAYEAFIQDPSLPHSIFEIEGARECAIEFRSFSKNAGFTGTRCAFTVVPKGLKGTASNGEAVELWGLWNRRQSTKFNGVSYIIQRGAEAVYSDAGQAEVKGLVNFYMENAAIIRRELSGAGLTIYGGEHAPYVWIKTPEGMDSWGFFDHLLNKANVVGTPGSGFGASGEGYFRLSAFNSRANVDAAMARIKAL</sequence>
<gene>
    <name evidence="1" type="primary">dapL</name>
    <name type="ordered locus">SYNW2147</name>
</gene>
<name>DAPAT_PARMW</name>
<comment type="function">
    <text evidence="1">Involved in the synthesis of meso-diaminopimelate (m-DAP or DL-DAP), required for both lysine and peptidoglycan biosynthesis. Catalyzes the direct conversion of tetrahydrodipicolinate to LL-diaminopimelate.</text>
</comment>
<comment type="catalytic activity">
    <reaction evidence="1">
        <text>(2S,6S)-2,6-diaminopimelate + 2-oxoglutarate = (S)-2,3,4,5-tetrahydrodipicolinate + L-glutamate + H2O + H(+)</text>
        <dbReference type="Rhea" id="RHEA:23988"/>
        <dbReference type="ChEBI" id="CHEBI:15377"/>
        <dbReference type="ChEBI" id="CHEBI:15378"/>
        <dbReference type="ChEBI" id="CHEBI:16810"/>
        <dbReference type="ChEBI" id="CHEBI:16845"/>
        <dbReference type="ChEBI" id="CHEBI:29985"/>
        <dbReference type="ChEBI" id="CHEBI:57609"/>
        <dbReference type="EC" id="2.6.1.83"/>
    </reaction>
</comment>
<comment type="cofactor">
    <cofactor evidence="1">
        <name>pyridoxal 5'-phosphate</name>
        <dbReference type="ChEBI" id="CHEBI:597326"/>
    </cofactor>
</comment>
<comment type="pathway">
    <text evidence="1">Amino-acid biosynthesis; L-lysine biosynthesis via DAP pathway; LL-2,6-diaminopimelate from (S)-tetrahydrodipicolinate (aminotransferase route): step 1/1.</text>
</comment>
<comment type="subunit">
    <text evidence="1">Homodimer.</text>
</comment>
<comment type="similarity">
    <text evidence="1">Belongs to the class-I pyridoxal-phosphate-dependent aminotransferase family. LL-diaminopimelate aminotransferase subfamily.</text>
</comment>